<organism>
    <name type="scientific">Microcebus simmonsi</name>
    <name type="common">Simmons's mouse lemur</name>
    <dbReference type="NCBI Taxonomy" id="236272"/>
    <lineage>
        <taxon>Eukaryota</taxon>
        <taxon>Metazoa</taxon>
        <taxon>Chordata</taxon>
        <taxon>Craniata</taxon>
        <taxon>Vertebrata</taxon>
        <taxon>Euteleostomi</taxon>
        <taxon>Mammalia</taxon>
        <taxon>Eutheria</taxon>
        <taxon>Euarchontoglires</taxon>
        <taxon>Primates</taxon>
        <taxon>Strepsirrhini</taxon>
        <taxon>Lemuriformes</taxon>
        <taxon>Cheirogaleidae</taxon>
        <taxon>Microcebus</taxon>
    </lineage>
</organism>
<accession>Q591M6</accession>
<evidence type="ECO:0000250" key="1">
    <source>
        <dbReference type="UniProtKB" id="P03901"/>
    </source>
</evidence>
<evidence type="ECO:0000250" key="2">
    <source>
        <dbReference type="UniProtKB" id="P03902"/>
    </source>
</evidence>
<evidence type="ECO:0000255" key="3"/>
<evidence type="ECO:0000305" key="4"/>
<reference key="1">
    <citation type="journal article" date="2006" name="Int. J. Primatol.">
        <title>Revision of the mouse lemurs (Microcebus) of Eastern Madagascar.</title>
        <authorList>
            <person name="Louis E.E. Jr."/>
            <person name="Coles M.S."/>
            <person name="Andriantompohavana R."/>
            <person name="Sommer J.A."/>
            <person name="Engberg S.E."/>
            <person name="Zaonarivelo J.R."/>
            <person name="Mayor M.I."/>
            <person name="Brenneman R.A."/>
        </authorList>
    </citation>
    <scope>NUCLEOTIDE SEQUENCE [GENOMIC DNA]</scope>
    <source>
        <strain>Isolate BET29</strain>
        <strain>Isolate BET35</strain>
        <strain>Isolate BET39</strain>
        <strain>Isolate BET87</strain>
        <strain>Isolate PBZT117</strain>
        <strain>Isolate ZAH12</strain>
        <strain>Isolate ZAH2</strain>
        <strain>Isolate ZAH5</strain>
        <strain>Isolate ZAH7</strain>
    </source>
</reference>
<proteinExistence type="inferred from homology"/>
<keyword id="KW-0249">Electron transport</keyword>
<keyword id="KW-0472">Membrane</keyword>
<keyword id="KW-0496">Mitochondrion</keyword>
<keyword id="KW-0999">Mitochondrion inner membrane</keyword>
<keyword id="KW-0520">NAD</keyword>
<keyword id="KW-0679">Respiratory chain</keyword>
<keyword id="KW-1278">Translocase</keyword>
<keyword id="KW-0812">Transmembrane</keyword>
<keyword id="KW-1133">Transmembrane helix</keyword>
<keyword id="KW-0813">Transport</keyword>
<keyword id="KW-0830">Ubiquinone</keyword>
<gene>
    <name type="primary">MT-ND4L</name>
    <name type="synonym">MTND4L</name>
    <name type="synonym">NADH4L</name>
    <name type="synonym">ND4L</name>
</gene>
<geneLocation type="mitochondrion"/>
<comment type="function">
    <text evidence="1">Core subunit of the mitochondrial membrane respiratory chain NADH dehydrogenase (Complex I) which catalyzes electron transfer from NADH through the respiratory chain, using ubiquinone as an electron acceptor. Part of the enzyme membrane arm which is embedded in the lipid bilayer and involved in proton translocation.</text>
</comment>
<comment type="catalytic activity">
    <reaction evidence="1">
        <text>a ubiquinone + NADH + 5 H(+)(in) = a ubiquinol + NAD(+) + 4 H(+)(out)</text>
        <dbReference type="Rhea" id="RHEA:29091"/>
        <dbReference type="Rhea" id="RHEA-COMP:9565"/>
        <dbReference type="Rhea" id="RHEA-COMP:9566"/>
        <dbReference type="ChEBI" id="CHEBI:15378"/>
        <dbReference type="ChEBI" id="CHEBI:16389"/>
        <dbReference type="ChEBI" id="CHEBI:17976"/>
        <dbReference type="ChEBI" id="CHEBI:57540"/>
        <dbReference type="ChEBI" id="CHEBI:57945"/>
        <dbReference type="EC" id="7.1.1.2"/>
    </reaction>
    <physiologicalReaction direction="left-to-right" evidence="1">
        <dbReference type="Rhea" id="RHEA:29092"/>
    </physiologicalReaction>
</comment>
<comment type="subunit">
    <text evidence="2">Core subunit of respiratory chain NADH dehydrogenase (Complex I) which is composed of 45 different subunits.</text>
</comment>
<comment type="subcellular location">
    <subcellularLocation>
        <location evidence="2">Mitochondrion inner membrane</location>
        <topology evidence="3">Multi-pass membrane protein</topology>
    </subcellularLocation>
</comment>
<comment type="similarity">
    <text evidence="4">Belongs to the complex I subunit 4L family.</text>
</comment>
<name>NU4LM_MICSI</name>
<feature type="chain" id="PRO_0000275060" description="NADH-ubiquinone oxidoreductase chain 4L">
    <location>
        <begin position="1"/>
        <end position="98"/>
    </location>
</feature>
<feature type="transmembrane region" description="Helical" evidence="3">
    <location>
        <begin position="2"/>
        <end position="22"/>
    </location>
</feature>
<feature type="transmembrane region" description="Helical" evidence="3">
    <location>
        <begin position="29"/>
        <end position="49"/>
    </location>
</feature>
<feature type="transmembrane region" description="Helical" evidence="3">
    <location>
        <begin position="61"/>
        <end position="81"/>
    </location>
</feature>
<sequence length="98" mass="10820">MPSISININLAFATALLGMLMFRSHMMSSLLCLEGMMLSMFILSTLTILNMQFTMSFTMPILLLVFAACEAAIGLALLVMVSNNYGLDYIQNLNLLQC</sequence>
<dbReference type="EC" id="7.1.1.2"/>
<dbReference type="EMBL" id="AY582663">
    <property type="protein sequence ID" value="AAS92843.1"/>
    <property type="molecule type" value="Genomic_DNA"/>
</dbReference>
<dbReference type="EMBL" id="AY582664">
    <property type="protein sequence ID" value="AAS92847.1"/>
    <property type="molecule type" value="Genomic_DNA"/>
</dbReference>
<dbReference type="EMBL" id="AY582665">
    <property type="protein sequence ID" value="AAS92851.1"/>
    <property type="molecule type" value="Genomic_DNA"/>
</dbReference>
<dbReference type="EMBL" id="AY582666">
    <property type="protein sequence ID" value="AAS92855.1"/>
    <property type="molecule type" value="Genomic_DNA"/>
</dbReference>
<dbReference type="EMBL" id="AY582667">
    <property type="protein sequence ID" value="AAS92859.1"/>
    <property type="molecule type" value="Genomic_DNA"/>
</dbReference>
<dbReference type="EMBL" id="AY582668">
    <property type="protein sequence ID" value="AAS92863.1"/>
    <property type="molecule type" value="Genomic_DNA"/>
</dbReference>
<dbReference type="EMBL" id="AY582669">
    <property type="protein sequence ID" value="AAS92867.1"/>
    <property type="molecule type" value="Genomic_DNA"/>
</dbReference>
<dbReference type="EMBL" id="AY582670">
    <property type="protein sequence ID" value="AAS92871.1"/>
    <property type="molecule type" value="Genomic_DNA"/>
</dbReference>
<dbReference type="EMBL" id="AY582671">
    <property type="protein sequence ID" value="AAS92875.1"/>
    <property type="molecule type" value="Genomic_DNA"/>
</dbReference>
<dbReference type="SMR" id="Q591M6"/>
<dbReference type="GO" id="GO:0005743">
    <property type="term" value="C:mitochondrial inner membrane"/>
    <property type="evidence" value="ECO:0000250"/>
    <property type="project" value="UniProtKB"/>
</dbReference>
<dbReference type="GO" id="GO:0045271">
    <property type="term" value="C:respiratory chain complex I"/>
    <property type="evidence" value="ECO:0000250"/>
    <property type="project" value="UniProtKB"/>
</dbReference>
<dbReference type="GO" id="GO:0008137">
    <property type="term" value="F:NADH dehydrogenase (ubiquinone) activity"/>
    <property type="evidence" value="ECO:0000250"/>
    <property type="project" value="UniProtKB"/>
</dbReference>
<dbReference type="GO" id="GO:0042773">
    <property type="term" value="P:ATP synthesis coupled electron transport"/>
    <property type="evidence" value="ECO:0007669"/>
    <property type="project" value="InterPro"/>
</dbReference>
<dbReference type="FunFam" id="1.10.287.3510:FF:000002">
    <property type="entry name" value="NADH-ubiquinone oxidoreductase chain 4L"/>
    <property type="match status" value="1"/>
</dbReference>
<dbReference type="Gene3D" id="1.10.287.3510">
    <property type="match status" value="1"/>
</dbReference>
<dbReference type="InterPro" id="IPR001133">
    <property type="entry name" value="NADH_UbQ_OxRdtase_chain4L/K"/>
</dbReference>
<dbReference type="InterPro" id="IPR039428">
    <property type="entry name" value="NUOK/Mnh_C1-like"/>
</dbReference>
<dbReference type="PANTHER" id="PTHR11434:SF0">
    <property type="entry name" value="NADH-UBIQUINONE OXIDOREDUCTASE CHAIN 4L"/>
    <property type="match status" value="1"/>
</dbReference>
<dbReference type="PANTHER" id="PTHR11434">
    <property type="entry name" value="NADH-UBIQUINONE OXIDOREDUCTASE SUBUNIT ND4L"/>
    <property type="match status" value="1"/>
</dbReference>
<dbReference type="Pfam" id="PF00420">
    <property type="entry name" value="Oxidored_q2"/>
    <property type="match status" value="1"/>
</dbReference>
<protein>
    <recommendedName>
        <fullName>NADH-ubiquinone oxidoreductase chain 4L</fullName>
        <ecNumber>7.1.1.2</ecNumber>
    </recommendedName>
    <alternativeName>
        <fullName>NADH dehydrogenase subunit 4L</fullName>
    </alternativeName>
</protein>